<comment type="function">
    <text evidence="1">During stationary phase, promotes and stabilizes dimerization of 70S ribosomes by the ribosome modulation factor (RMF), leading to the formation of inactive 100S ribosomes.</text>
</comment>
<comment type="subunit">
    <text evidence="1">Associates exclusively with 100S ribosomes, which are dimers of 70S ribosomes.</text>
</comment>
<comment type="similarity">
    <text evidence="2">Belongs to the HPF/YfiA ribosome-associated protein family. Short HPF subfamily.</text>
</comment>
<organism>
    <name type="scientific">Klebsiella oxytoca</name>
    <dbReference type="NCBI Taxonomy" id="571"/>
    <lineage>
        <taxon>Bacteria</taxon>
        <taxon>Pseudomonadati</taxon>
        <taxon>Pseudomonadota</taxon>
        <taxon>Gammaproteobacteria</taxon>
        <taxon>Enterobacterales</taxon>
        <taxon>Enterobacteriaceae</taxon>
        <taxon>Klebsiella/Raoultella group</taxon>
        <taxon>Klebsiella</taxon>
    </lineage>
</organism>
<name>HPF_KLEOX</name>
<evidence type="ECO:0000250" key="1">
    <source>
        <dbReference type="UniProtKB" id="P0AFX0"/>
    </source>
</evidence>
<evidence type="ECO:0000305" key="2"/>
<protein>
    <recommendedName>
        <fullName>Ribosome hibernation promoting factor</fullName>
        <shortName>HPF</shortName>
    </recommendedName>
    <alternativeName>
        <fullName>Hibernation factor HPF</fullName>
    </alternativeName>
</protein>
<gene>
    <name type="primary">hpf</name>
</gene>
<accession>P17161</accession>
<accession>P11377</accession>
<dbReference type="EMBL" id="X16335">
    <property type="protein sequence ID" value="CAA34391.1"/>
    <property type="molecule type" value="Genomic_DNA"/>
</dbReference>
<dbReference type="EMBL" id="X03147">
    <property type="protein sequence ID" value="CAA26926.1"/>
    <property type="molecule type" value="Genomic_DNA"/>
</dbReference>
<dbReference type="PIR" id="S07660">
    <property type="entry name" value="S07660"/>
</dbReference>
<dbReference type="RefSeq" id="WP_004106167.1">
    <property type="nucleotide sequence ID" value="NZ_WVTN01000004.1"/>
</dbReference>
<dbReference type="SMR" id="P17161"/>
<dbReference type="STRING" id="571.AB185_09965"/>
<dbReference type="GeneID" id="97393275"/>
<dbReference type="eggNOG" id="COG1544">
    <property type="taxonomic scope" value="Bacteria"/>
</dbReference>
<dbReference type="OrthoDB" id="9795980at2"/>
<dbReference type="GO" id="GO:0022627">
    <property type="term" value="C:cytosolic small ribosomal subunit"/>
    <property type="evidence" value="ECO:0007669"/>
    <property type="project" value="TreeGrafter"/>
</dbReference>
<dbReference type="GO" id="GO:0043024">
    <property type="term" value="F:ribosomal small subunit binding"/>
    <property type="evidence" value="ECO:0007669"/>
    <property type="project" value="TreeGrafter"/>
</dbReference>
<dbReference type="GO" id="GO:0045900">
    <property type="term" value="P:negative regulation of translational elongation"/>
    <property type="evidence" value="ECO:0007669"/>
    <property type="project" value="TreeGrafter"/>
</dbReference>
<dbReference type="CDD" id="cd00552">
    <property type="entry name" value="RaiA"/>
    <property type="match status" value="1"/>
</dbReference>
<dbReference type="FunFam" id="3.30.160.100:FF:000001">
    <property type="entry name" value="Ribosome hibernation promoting factor"/>
    <property type="match status" value="1"/>
</dbReference>
<dbReference type="Gene3D" id="3.30.160.100">
    <property type="entry name" value="Ribosome hibernation promotion factor-like"/>
    <property type="match status" value="1"/>
</dbReference>
<dbReference type="InterPro" id="IPR050574">
    <property type="entry name" value="HPF/YfiA_ribosome-assoc"/>
</dbReference>
<dbReference type="InterPro" id="IPR036567">
    <property type="entry name" value="RHF-like"/>
</dbReference>
<dbReference type="InterPro" id="IPR003489">
    <property type="entry name" value="RHF/RaiA"/>
</dbReference>
<dbReference type="NCBIfam" id="NF007780">
    <property type="entry name" value="PRK10470.1"/>
    <property type="match status" value="1"/>
</dbReference>
<dbReference type="NCBIfam" id="TIGR00741">
    <property type="entry name" value="yfiA"/>
    <property type="match status" value="1"/>
</dbReference>
<dbReference type="PANTHER" id="PTHR33231">
    <property type="entry name" value="30S RIBOSOMAL PROTEIN"/>
    <property type="match status" value="1"/>
</dbReference>
<dbReference type="PANTHER" id="PTHR33231:SF1">
    <property type="entry name" value="30S RIBOSOMAL PROTEIN"/>
    <property type="match status" value="1"/>
</dbReference>
<dbReference type="Pfam" id="PF02482">
    <property type="entry name" value="Ribosomal_S30AE"/>
    <property type="match status" value="1"/>
</dbReference>
<dbReference type="SUPFAM" id="SSF69754">
    <property type="entry name" value="Ribosome binding protein Y (YfiA homologue)"/>
    <property type="match status" value="1"/>
</dbReference>
<feature type="chain" id="PRO_0000097421" description="Ribosome hibernation promoting factor">
    <location>
        <begin position="1"/>
        <end position="95"/>
    </location>
</feature>
<reference key="1">
    <citation type="journal article" date="1989" name="Mol. Microbiol.">
        <title>Mutations in genes downstream of the rpoN gene (encoding sigma 54) of Klebsiella pneumoniae affect expression from sigma 54-dependent promoters.</title>
        <authorList>
            <person name="Merrick M.J."/>
            <person name="Coppard J.R."/>
        </authorList>
    </citation>
    <scope>NUCLEOTIDE SEQUENCE [GENOMIC DNA]</scope>
    <source>
        <strain>M5a1</strain>
    </source>
</reference>
<reference key="2">
    <citation type="journal article" date="1985" name="Nucleic Acids Res.">
        <title>The nucleotide sequence of the nitrogen-regulation gene ntrA of Klebsiella pneumoniae and comparison with conserved features in bacterial RNA polymerase sigma factors.</title>
        <authorList>
            <person name="Merrick M.J."/>
            <person name="Gibbins J.R."/>
        </authorList>
    </citation>
    <scope>NUCLEOTIDE SEQUENCE [GENOMIC DNA] OF 1-75</scope>
</reference>
<proteinExistence type="inferred from homology"/>
<sequence length="95" mass="10759">MQLNITGHNVEITPAMRDFVTAKFSKLEQFFDRINQVYIVLKVEKVTQIADANLHVNGGEIHASAEGQDMYAAIDGLIDKLARQLTKHKDKLKQH</sequence>
<keyword id="KW-0810">Translation regulation</keyword>